<reference key="1">
    <citation type="journal article" date="2000" name="Nucleic Acids Res.">
        <title>Complete genome sequence of the alkaliphilic bacterium Bacillus halodurans and genomic sequence comparison with Bacillus subtilis.</title>
        <authorList>
            <person name="Takami H."/>
            <person name="Nakasone K."/>
            <person name="Takaki Y."/>
            <person name="Maeno G."/>
            <person name="Sasaki R."/>
            <person name="Masui N."/>
            <person name="Fuji F."/>
            <person name="Hirama C."/>
            <person name="Nakamura Y."/>
            <person name="Ogasawara N."/>
            <person name="Kuhara S."/>
            <person name="Horikoshi K."/>
        </authorList>
    </citation>
    <scope>NUCLEOTIDE SEQUENCE [LARGE SCALE GENOMIC DNA]</scope>
    <source>
        <strain>ATCC BAA-125 / DSM 18197 / FERM 7344 / JCM 9153 / C-125</strain>
    </source>
</reference>
<comment type="function">
    <text evidence="1">Poorly processive, error-prone DNA polymerase involved in untargeted mutagenesis. Copies undamaged DNA at stalled replication forks, which arise in vivo from mismatched or misaligned primer ends. These misaligned primers can be extended by PolIV. Exhibits no 3'-5' exonuclease (proofreading) activity. May be involved in translesional synthesis, in conjunction with the beta clamp from PolIII (By similarity).</text>
</comment>
<comment type="catalytic activity">
    <reaction>
        <text>DNA(n) + a 2'-deoxyribonucleoside 5'-triphosphate = DNA(n+1) + diphosphate</text>
        <dbReference type="Rhea" id="RHEA:22508"/>
        <dbReference type="Rhea" id="RHEA-COMP:17339"/>
        <dbReference type="Rhea" id="RHEA-COMP:17340"/>
        <dbReference type="ChEBI" id="CHEBI:33019"/>
        <dbReference type="ChEBI" id="CHEBI:61560"/>
        <dbReference type="ChEBI" id="CHEBI:173112"/>
        <dbReference type="EC" id="2.7.7.7"/>
    </reaction>
</comment>
<comment type="cofactor">
    <cofactor evidence="1">
        <name>Mg(2+)</name>
        <dbReference type="ChEBI" id="CHEBI:18420"/>
    </cofactor>
    <text evidence="1">Binds 2 magnesium ions per subunit.</text>
</comment>
<comment type="subunit">
    <text evidence="1">Monomer.</text>
</comment>
<comment type="subcellular location">
    <subcellularLocation>
        <location evidence="1">Cytoplasm</location>
    </subcellularLocation>
</comment>
<comment type="similarity">
    <text evidence="2">Belongs to the DNA polymerase type-Y family.</text>
</comment>
<evidence type="ECO:0000250" key="1"/>
<evidence type="ECO:0000305" key="2"/>
<accession>Q9KCU7</accession>
<keyword id="KW-0963">Cytoplasm</keyword>
<keyword id="KW-0227">DNA damage</keyword>
<keyword id="KW-0234">DNA repair</keyword>
<keyword id="KW-0235">DNA replication</keyword>
<keyword id="KW-0238">DNA-binding</keyword>
<keyword id="KW-0239">DNA-directed DNA polymerase</keyword>
<keyword id="KW-0460">Magnesium</keyword>
<keyword id="KW-0479">Metal-binding</keyword>
<keyword id="KW-0515">Mutator protein</keyword>
<keyword id="KW-0548">Nucleotidyltransferase</keyword>
<keyword id="KW-1185">Reference proteome</keyword>
<keyword id="KW-0808">Transferase</keyword>
<sequence length="413" mass="47226">MGKGRVIFHVDMNSFYASVEMAYDPSLKGKAIAVAGSVKDRRGIVVTSSYEARAKGVRSPIPVWQALRKCPELILIPPNFDRYRSASQKIFSLLEEYTPLVEKVSIDEGYMDVTTTIKKVHPLELAKEIQQRILAEMDLPCSIGIAPNKFLAKMASDMKKPLGITVLRKRDIAEKLWSLPIEEMYGIGRRSVDTYKKYQLHTIGDLAKADPAWLEKKFGINGPRLHCRANGIDERPVDPEAVFHFKSVGNSTTLPEDTTNEGRLTDVLHQLSHSVHVRMKRKHVFCYGVQLTIRYDDRKTITRSRKLEHPIQEKDDIFTVALSLWKQAWNGRPIRLLGVTGYDVIDKKYAYEPLDLFRYEEQIKQATLAETISSIHKRYGKPIVAKGKDLDLFKEVDETKKGTSFDRDFFQHD</sequence>
<protein>
    <recommendedName>
        <fullName>DNA polymerase IV 1</fullName>
        <shortName>Pol IV 1</shortName>
        <ecNumber>2.7.7.7</ecNumber>
    </recommendedName>
</protein>
<dbReference type="EC" id="2.7.7.7"/>
<dbReference type="EMBL" id="BA000004">
    <property type="protein sequence ID" value="BAB05191.1"/>
    <property type="molecule type" value="Genomic_DNA"/>
</dbReference>
<dbReference type="PIR" id="H83833">
    <property type="entry name" value="H83833"/>
</dbReference>
<dbReference type="RefSeq" id="WP_010897637.1">
    <property type="nucleotide sequence ID" value="NC_002570.2"/>
</dbReference>
<dbReference type="SMR" id="Q9KCU7"/>
<dbReference type="STRING" id="272558.gene:10727370"/>
<dbReference type="KEGG" id="bha:BH1472"/>
<dbReference type="eggNOG" id="COG0389">
    <property type="taxonomic scope" value="Bacteria"/>
</dbReference>
<dbReference type="HOGENOM" id="CLU_012348_1_1_9"/>
<dbReference type="OrthoDB" id="9808813at2"/>
<dbReference type="Proteomes" id="UP000001258">
    <property type="component" value="Chromosome"/>
</dbReference>
<dbReference type="GO" id="GO:0005829">
    <property type="term" value="C:cytosol"/>
    <property type="evidence" value="ECO:0007669"/>
    <property type="project" value="TreeGrafter"/>
</dbReference>
<dbReference type="GO" id="GO:0003684">
    <property type="term" value="F:damaged DNA binding"/>
    <property type="evidence" value="ECO:0007669"/>
    <property type="project" value="InterPro"/>
</dbReference>
<dbReference type="GO" id="GO:0003887">
    <property type="term" value="F:DNA-directed DNA polymerase activity"/>
    <property type="evidence" value="ECO:0007669"/>
    <property type="project" value="UniProtKB-UniRule"/>
</dbReference>
<dbReference type="GO" id="GO:0000287">
    <property type="term" value="F:magnesium ion binding"/>
    <property type="evidence" value="ECO:0007669"/>
    <property type="project" value="UniProtKB-UniRule"/>
</dbReference>
<dbReference type="GO" id="GO:0006261">
    <property type="term" value="P:DNA-templated DNA replication"/>
    <property type="evidence" value="ECO:0007669"/>
    <property type="project" value="UniProtKB-UniRule"/>
</dbReference>
<dbReference type="GO" id="GO:0042276">
    <property type="term" value="P:error-prone translesion synthesis"/>
    <property type="evidence" value="ECO:0007669"/>
    <property type="project" value="TreeGrafter"/>
</dbReference>
<dbReference type="GO" id="GO:0009432">
    <property type="term" value="P:SOS response"/>
    <property type="evidence" value="ECO:0007669"/>
    <property type="project" value="TreeGrafter"/>
</dbReference>
<dbReference type="CDD" id="cd03586">
    <property type="entry name" value="PolY_Pol_IV_kappa"/>
    <property type="match status" value="1"/>
</dbReference>
<dbReference type="Gene3D" id="3.30.70.270">
    <property type="match status" value="1"/>
</dbReference>
<dbReference type="Gene3D" id="3.40.1170.60">
    <property type="match status" value="1"/>
</dbReference>
<dbReference type="Gene3D" id="1.10.150.20">
    <property type="entry name" value="5' to 3' exonuclease, C-terminal subdomain"/>
    <property type="match status" value="1"/>
</dbReference>
<dbReference type="Gene3D" id="3.30.1490.100">
    <property type="entry name" value="DNA polymerase, Y-family, little finger domain"/>
    <property type="match status" value="1"/>
</dbReference>
<dbReference type="HAMAP" id="MF_01113">
    <property type="entry name" value="DNApol_IV"/>
    <property type="match status" value="1"/>
</dbReference>
<dbReference type="InterPro" id="IPR043502">
    <property type="entry name" value="DNA/RNA_pol_sf"/>
</dbReference>
<dbReference type="InterPro" id="IPR036775">
    <property type="entry name" value="DNA_pol_Y-fam_lit_finger_sf"/>
</dbReference>
<dbReference type="InterPro" id="IPR017961">
    <property type="entry name" value="DNA_pol_Y-fam_little_finger"/>
</dbReference>
<dbReference type="InterPro" id="IPR050116">
    <property type="entry name" value="DNA_polymerase-Y"/>
</dbReference>
<dbReference type="InterPro" id="IPR022880">
    <property type="entry name" value="DNApol_IV"/>
</dbReference>
<dbReference type="InterPro" id="IPR043128">
    <property type="entry name" value="Rev_trsase/Diguanyl_cyclase"/>
</dbReference>
<dbReference type="InterPro" id="IPR001126">
    <property type="entry name" value="UmuC"/>
</dbReference>
<dbReference type="NCBIfam" id="NF002492">
    <property type="entry name" value="PRK01810.1"/>
    <property type="match status" value="1"/>
</dbReference>
<dbReference type="NCBIfam" id="NF002677">
    <property type="entry name" value="PRK02406.1"/>
    <property type="match status" value="1"/>
</dbReference>
<dbReference type="PANTHER" id="PTHR11076:SF33">
    <property type="entry name" value="DNA POLYMERASE KAPPA"/>
    <property type="match status" value="1"/>
</dbReference>
<dbReference type="PANTHER" id="PTHR11076">
    <property type="entry name" value="DNA REPAIR POLYMERASE UMUC / TRANSFERASE FAMILY MEMBER"/>
    <property type="match status" value="1"/>
</dbReference>
<dbReference type="Pfam" id="PF00817">
    <property type="entry name" value="IMS"/>
    <property type="match status" value="1"/>
</dbReference>
<dbReference type="Pfam" id="PF11799">
    <property type="entry name" value="IMS_C"/>
    <property type="match status" value="1"/>
</dbReference>
<dbReference type="SUPFAM" id="SSF56672">
    <property type="entry name" value="DNA/RNA polymerases"/>
    <property type="match status" value="1"/>
</dbReference>
<dbReference type="SUPFAM" id="SSF100879">
    <property type="entry name" value="Lesion bypass DNA polymerase (Y-family), little finger domain"/>
    <property type="match status" value="1"/>
</dbReference>
<dbReference type="PROSITE" id="PS50173">
    <property type="entry name" value="UMUC"/>
    <property type="match status" value="1"/>
</dbReference>
<organism>
    <name type="scientific">Halalkalibacterium halodurans (strain ATCC BAA-125 / DSM 18197 / FERM 7344 / JCM 9153 / C-125)</name>
    <name type="common">Bacillus halodurans</name>
    <dbReference type="NCBI Taxonomy" id="272558"/>
    <lineage>
        <taxon>Bacteria</taxon>
        <taxon>Bacillati</taxon>
        <taxon>Bacillota</taxon>
        <taxon>Bacilli</taxon>
        <taxon>Bacillales</taxon>
        <taxon>Bacillaceae</taxon>
        <taxon>Halalkalibacterium (ex Joshi et al. 2022)</taxon>
    </lineage>
</organism>
<feature type="chain" id="PRO_0000173902" description="DNA polymerase IV 1">
    <location>
        <begin position="1"/>
        <end position="413"/>
    </location>
</feature>
<feature type="domain" description="UmuC">
    <location>
        <begin position="7"/>
        <end position="188"/>
    </location>
</feature>
<feature type="active site" evidence="1">
    <location>
        <position position="108"/>
    </location>
</feature>
<feature type="binding site" evidence="1">
    <location>
        <position position="11"/>
    </location>
    <ligand>
        <name>Mg(2+)</name>
        <dbReference type="ChEBI" id="CHEBI:18420"/>
    </ligand>
</feature>
<feature type="binding site" evidence="1">
    <location>
        <position position="107"/>
    </location>
    <ligand>
        <name>Mg(2+)</name>
        <dbReference type="ChEBI" id="CHEBI:18420"/>
    </ligand>
</feature>
<feature type="site" description="Substrate discrimination" evidence="1">
    <location>
        <position position="16"/>
    </location>
</feature>
<gene>
    <name type="primary">dinB1</name>
    <name type="ordered locus">BH1472</name>
</gene>
<proteinExistence type="inferred from homology"/>
<name>DPO41_HALH5</name>